<sequence length="367" mass="38577">MTASRRTLMVMAGGTGGHVFPGLAVAHRMEAAGWRVVWLGNPAGMEATLVPKHGIPMEYVRFGGLRGKGLKTKLTLPFNLLRACWQSLGALRRVRPDVVLGMGGYITFPAGVMAALSGRPLVLHEQNSIAGLANKVLAKFAKRVLVAFPGALPHAEWTGNPIRAELARTETPQARYASRSGPLNLLVVGGSLGAAALNEVVPRALALLAPGERPRVVHQAGAKHIDALKANYEAAGFAGGDAVRLVPFIDDMASAYAAADLVICRSGAMTVSEIAAVGVAALFVPFPYAVDDHQTTNAAFLADAGAAVLVQQRDLSAELLADWLRSQSRASLADMAERSRSLAKPEATDEVARICATVAGANLEEIK</sequence>
<name>MURG_BURCM</name>
<proteinExistence type="inferred from homology"/>
<accession>Q0BIK1</accession>
<feature type="chain" id="PRO_1000002623" description="UDP-N-acetylglucosamine--N-acetylmuramyl-(pentapeptide) pyrophosphoryl-undecaprenol N-acetylglucosamine transferase">
    <location>
        <begin position="1"/>
        <end position="367"/>
    </location>
</feature>
<feature type="binding site" evidence="1">
    <location>
        <begin position="15"/>
        <end position="17"/>
    </location>
    <ligand>
        <name>UDP-N-acetyl-alpha-D-glucosamine</name>
        <dbReference type="ChEBI" id="CHEBI:57705"/>
    </ligand>
</feature>
<feature type="binding site" evidence="1">
    <location>
        <position position="127"/>
    </location>
    <ligand>
        <name>UDP-N-acetyl-alpha-D-glucosamine</name>
        <dbReference type="ChEBI" id="CHEBI:57705"/>
    </ligand>
</feature>
<feature type="binding site" evidence="1">
    <location>
        <position position="163"/>
    </location>
    <ligand>
        <name>UDP-N-acetyl-alpha-D-glucosamine</name>
        <dbReference type="ChEBI" id="CHEBI:57705"/>
    </ligand>
</feature>
<feature type="binding site" evidence="1">
    <location>
        <position position="191"/>
    </location>
    <ligand>
        <name>UDP-N-acetyl-alpha-D-glucosamine</name>
        <dbReference type="ChEBI" id="CHEBI:57705"/>
    </ligand>
</feature>
<feature type="binding site" evidence="1">
    <location>
        <position position="249"/>
    </location>
    <ligand>
        <name>UDP-N-acetyl-alpha-D-glucosamine</name>
        <dbReference type="ChEBI" id="CHEBI:57705"/>
    </ligand>
</feature>
<feature type="binding site" evidence="1">
    <location>
        <position position="294"/>
    </location>
    <ligand>
        <name>UDP-N-acetyl-alpha-D-glucosamine</name>
        <dbReference type="ChEBI" id="CHEBI:57705"/>
    </ligand>
</feature>
<protein>
    <recommendedName>
        <fullName evidence="1">UDP-N-acetylglucosamine--N-acetylmuramyl-(pentapeptide) pyrophosphoryl-undecaprenol N-acetylglucosamine transferase</fullName>
        <ecNumber evidence="1">2.4.1.227</ecNumber>
    </recommendedName>
    <alternativeName>
        <fullName evidence="1">Undecaprenyl-PP-MurNAc-pentapeptide-UDPGlcNAc GlcNAc transferase</fullName>
    </alternativeName>
</protein>
<keyword id="KW-0131">Cell cycle</keyword>
<keyword id="KW-0132">Cell division</keyword>
<keyword id="KW-0997">Cell inner membrane</keyword>
<keyword id="KW-1003">Cell membrane</keyword>
<keyword id="KW-0133">Cell shape</keyword>
<keyword id="KW-0961">Cell wall biogenesis/degradation</keyword>
<keyword id="KW-0328">Glycosyltransferase</keyword>
<keyword id="KW-0472">Membrane</keyword>
<keyword id="KW-0573">Peptidoglycan synthesis</keyword>
<keyword id="KW-0808">Transferase</keyword>
<comment type="function">
    <text evidence="1">Cell wall formation. Catalyzes the transfer of a GlcNAc subunit on undecaprenyl-pyrophosphoryl-MurNAc-pentapeptide (lipid intermediate I) to form undecaprenyl-pyrophosphoryl-MurNAc-(pentapeptide)GlcNAc (lipid intermediate II).</text>
</comment>
<comment type="catalytic activity">
    <reaction evidence="1">
        <text>di-trans,octa-cis-undecaprenyl diphospho-N-acetyl-alpha-D-muramoyl-L-alanyl-D-glutamyl-meso-2,6-diaminopimeloyl-D-alanyl-D-alanine + UDP-N-acetyl-alpha-D-glucosamine = di-trans,octa-cis-undecaprenyl diphospho-[N-acetyl-alpha-D-glucosaminyl-(1-&gt;4)]-N-acetyl-alpha-D-muramoyl-L-alanyl-D-glutamyl-meso-2,6-diaminopimeloyl-D-alanyl-D-alanine + UDP + H(+)</text>
        <dbReference type="Rhea" id="RHEA:31227"/>
        <dbReference type="ChEBI" id="CHEBI:15378"/>
        <dbReference type="ChEBI" id="CHEBI:57705"/>
        <dbReference type="ChEBI" id="CHEBI:58223"/>
        <dbReference type="ChEBI" id="CHEBI:61387"/>
        <dbReference type="ChEBI" id="CHEBI:61388"/>
        <dbReference type="EC" id="2.4.1.227"/>
    </reaction>
</comment>
<comment type="pathway">
    <text evidence="1">Cell wall biogenesis; peptidoglycan biosynthesis.</text>
</comment>
<comment type="subcellular location">
    <subcellularLocation>
        <location evidence="1">Cell inner membrane</location>
        <topology evidence="1">Peripheral membrane protein</topology>
        <orientation evidence="1">Cytoplasmic side</orientation>
    </subcellularLocation>
</comment>
<comment type="similarity">
    <text evidence="1">Belongs to the glycosyltransferase 28 family. MurG subfamily.</text>
</comment>
<organism>
    <name type="scientific">Burkholderia ambifaria (strain ATCC BAA-244 / DSM 16087 / CCUG 44356 / LMG 19182 / AMMD)</name>
    <name type="common">Burkholderia cepacia (strain AMMD)</name>
    <dbReference type="NCBI Taxonomy" id="339670"/>
    <lineage>
        <taxon>Bacteria</taxon>
        <taxon>Pseudomonadati</taxon>
        <taxon>Pseudomonadota</taxon>
        <taxon>Betaproteobacteria</taxon>
        <taxon>Burkholderiales</taxon>
        <taxon>Burkholderiaceae</taxon>
        <taxon>Burkholderia</taxon>
        <taxon>Burkholderia cepacia complex</taxon>
    </lineage>
</organism>
<gene>
    <name evidence="1" type="primary">murG</name>
    <name type="ordered locus">Bamb_0463</name>
</gene>
<dbReference type="EC" id="2.4.1.227" evidence="1"/>
<dbReference type="EMBL" id="CP000440">
    <property type="protein sequence ID" value="ABI86022.1"/>
    <property type="molecule type" value="Genomic_DNA"/>
</dbReference>
<dbReference type="RefSeq" id="WP_011655892.1">
    <property type="nucleotide sequence ID" value="NZ_CP009798.1"/>
</dbReference>
<dbReference type="SMR" id="Q0BIK1"/>
<dbReference type="GeneID" id="93084120"/>
<dbReference type="KEGG" id="bam:Bamb_0463"/>
<dbReference type="PATRIC" id="fig|339670.21.peg.1143"/>
<dbReference type="eggNOG" id="COG0707">
    <property type="taxonomic scope" value="Bacteria"/>
</dbReference>
<dbReference type="UniPathway" id="UPA00219"/>
<dbReference type="Proteomes" id="UP000000662">
    <property type="component" value="Chromosome 1"/>
</dbReference>
<dbReference type="GO" id="GO:0005886">
    <property type="term" value="C:plasma membrane"/>
    <property type="evidence" value="ECO:0007669"/>
    <property type="project" value="UniProtKB-SubCell"/>
</dbReference>
<dbReference type="GO" id="GO:0051991">
    <property type="term" value="F:UDP-N-acetyl-D-glucosamine:N-acetylmuramoyl-L-alanyl-D-glutamyl-meso-2,6-diaminopimelyl-D-alanyl-D-alanine-diphosphoundecaprenol 4-beta-N-acetylglucosaminlytransferase activity"/>
    <property type="evidence" value="ECO:0007669"/>
    <property type="project" value="RHEA"/>
</dbReference>
<dbReference type="GO" id="GO:0050511">
    <property type="term" value="F:undecaprenyldiphospho-muramoylpentapeptide beta-N-acetylglucosaminyltransferase activity"/>
    <property type="evidence" value="ECO:0007669"/>
    <property type="project" value="UniProtKB-UniRule"/>
</dbReference>
<dbReference type="GO" id="GO:0005975">
    <property type="term" value="P:carbohydrate metabolic process"/>
    <property type="evidence" value="ECO:0007669"/>
    <property type="project" value="InterPro"/>
</dbReference>
<dbReference type="GO" id="GO:0051301">
    <property type="term" value="P:cell division"/>
    <property type="evidence" value="ECO:0007669"/>
    <property type="project" value="UniProtKB-KW"/>
</dbReference>
<dbReference type="GO" id="GO:0071555">
    <property type="term" value="P:cell wall organization"/>
    <property type="evidence" value="ECO:0007669"/>
    <property type="project" value="UniProtKB-KW"/>
</dbReference>
<dbReference type="GO" id="GO:0030259">
    <property type="term" value="P:lipid glycosylation"/>
    <property type="evidence" value="ECO:0007669"/>
    <property type="project" value="UniProtKB-UniRule"/>
</dbReference>
<dbReference type="GO" id="GO:0009252">
    <property type="term" value="P:peptidoglycan biosynthetic process"/>
    <property type="evidence" value="ECO:0007669"/>
    <property type="project" value="UniProtKB-UniRule"/>
</dbReference>
<dbReference type="GO" id="GO:0008360">
    <property type="term" value="P:regulation of cell shape"/>
    <property type="evidence" value="ECO:0007669"/>
    <property type="project" value="UniProtKB-KW"/>
</dbReference>
<dbReference type="CDD" id="cd03785">
    <property type="entry name" value="GT28_MurG"/>
    <property type="match status" value="1"/>
</dbReference>
<dbReference type="Gene3D" id="3.40.50.2000">
    <property type="entry name" value="Glycogen Phosphorylase B"/>
    <property type="match status" value="2"/>
</dbReference>
<dbReference type="HAMAP" id="MF_00033">
    <property type="entry name" value="MurG"/>
    <property type="match status" value="1"/>
</dbReference>
<dbReference type="InterPro" id="IPR006009">
    <property type="entry name" value="GlcNAc_MurG"/>
</dbReference>
<dbReference type="InterPro" id="IPR007235">
    <property type="entry name" value="Glyco_trans_28_C"/>
</dbReference>
<dbReference type="InterPro" id="IPR004276">
    <property type="entry name" value="GlycoTrans_28_N"/>
</dbReference>
<dbReference type="NCBIfam" id="TIGR01133">
    <property type="entry name" value="murG"/>
    <property type="match status" value="1"/>
</dbReference>
<dbReference type="PANTHER" id="PTHR21015:SF22">
    <property type="entry name" value="GLYCOSYLTRANSFERASE"/>
    <property type="match status" value="1"/>
</dbReference>
<dbReference type="PANTHER" id="PTHR21015">
    <property type="entry name" value="UDP-N-ACETYLGLUCOSAMINE--N-ACETYLMURAMYL-(PENTAPEPTIDE) PYROPHOSPHORYL-UNDECAPRENOL N-ACETYLGLUCOSAMINE TRANSFERASE 1"/>
    <property type="match status" value="1"/>
</dbReference>
<dbReference type="Pfam" id="PF04101">
    <property type="entry name" value="Glyco_tran_28_C"/>
    <property type="match status" value="1"/>
</dbReference>
<dbReference type="Pfam" id="PF03033">
    <property type="entry name" value="Glyco_transf_28"/>
    <property type="match status" value="1"/>
</dbReference>
<dbReference type="SUPFAM" id="SSF53756">
    <property type="entry name" value="UDP-Glycosyltransferase/glycogen phosphorylase"/>
    <property type="match status" value="1"/>
</dbReference>
<reference key="1">
    <citation type="submission" date="2006-08" db="EMBL/GenBank/DDBJ databases">
        <title>Complete sequence of chromosome 1 of Burkholderia cepacia AMMD.</title>
        <authorList>
            <person name="Copeland A."/>
            <person name="Lucas S."/>
            <person name="Lapidus A."/>
            <person name="Barry K."/>
            <person name="Detter J.C."/>
            <person name="Glavina del Rio T."/>
            <person name="Hammon N."/>
            <person name="Israni S."/>
            <person name="Pitluck S."/>
            <person name="Bruce D."/>
            <person name="Chain P."/>
            <person name="Malfatti S."/>
            <person name="Shin M."/>
            <person name="Vergez L."/>
            <person name="Schmutz J."/>
            <person name="Larimer F."/>
            <person name="Land M."/>
            <person name="Hauser L."/>
            <person name="Kyrpides N."/>
            <person name="Kim E."/>
            <person name="Parke J."/>
            <person name="Coenye T."/>
            <person name="Konstantinidis K."/>
            <person name="Ramette A."/>
            <person name="Tiedje J."/>
            <person name="Richardson P."/>
        </authorList>
    </citation>
    <scope>NUCLEOTIDE SEQUENCE [LARGE SCALE GENOMIC DNA]</scope>
    <source>
        <strain>ATCC BAA-244 / DSM 16087 / CCUG 44356 / LMG 19182 / AMMD</strain>
    </source>
</reference>
<evidence type="ECO:0000255" key="1">
    <source>
        <dbReference type="HAMAP-Rule" id="MF_00033"/>
    </source>
</evidence>